<evidence type="ECO:0000256" key="1">
    <source>
        <dbReference type="SAM" id="MobiDB-lite"/>
    </source>
</evidence>
<evidence type="ECO:0000269" key="2">
    <source>
    </source>
</evidence>
<evidence type="ECO:0000269" key="3">
    <source>
    </source>
</evidence>
<evidence type="ECO:0000269" key="4">
    <source>
    </source>
</evidence>
<evidence type="ECO:0000269" key="5">
    <source>
    </source>
</evidence>
<evidence type="ECO:0000269" key="6">
    <source>
    </source>
</evidence>
<evidence type="ECO:0000269" key="7">
    <source>
    </source>
</evidence>
<evidence type="ECO:0000305" key="8"/>
<evidence type="ECO:0007829" key="9">
    <source>
        <dbReference type="PDB" id="6QH1"/>
    </source>
</evidence>
<accession>Q10585</accession>
<feature type="chain" id="PRO_0000072110" description="S-phase delaying protein 1">
    <location>
        <begin position="1"/>
        <end position="124"/>
    </location>
</feature>
<feature type="region of interest" description="Disordered" evidence="1">
    <location>
        <begin position="1"/>
        <end position="32"/>
    </location>
</feature>
<feature type="compositionally biased region" description="Polar residues" evidence="1">
    <location>
        <begin position="1"/>
        <end position="31"/>
    </location>
</feature>
<feature type="helix" evidence="9">
    <location>
        <begin position="33"/>
        <end position="36"/>
    </location>
</feature>
<gene>
    <name type="primary">spd1</name>
    <name type="ORF">SPAC29B12.03</name>
</gene>
<comment type="function">
    <text evidence="2 3 6 7">Regulates the ribonucleotide reductase activity through its mediation of the nuclear localization of suc22, the small subunit of the ribonucleotide reductase. Delays the progression of the G1-S phase transition, thereby ensuring the G1 phase is complete. Interacts with both p34 and the p34-p56 complex, although no direct inhibitory effect on the bound proteins has been demonstrated. The action of p14 may happen coincidentally with the cdc10 function or may happen downstream of this.</text>
</comment>
<comment type="subunit">
    <text evidence="6 7">Interacts with cdc22.</text>
</comment>
<comment type="subcellular location">
    <subcellularLocation>
        <location>Cytoplasm</location>
    </subcellularLocation>
    <subcellularLocation>
        <location>Nucleus</location>
    </subcellularLocation>
</comment>
<comment type="developmental stage">
    <text>The levels peak in the G1 phase of the cell cycle, then mostly disappear during S phase and reappear in the G2 phase.</text>
</comment>
<comment type="PTM">
    <text evidence="3 4 5">Ubiquitinated by the DCX(DTL) complex, also named CRL4(CDT2) complex, leading to its degradation.</text>
</comment>
<comment type="similarity">
    <text evidence="8">Belongs to the DIF1/spd1 family.</text>
</comment>
<proteinExistence type="evidence at protein level"/>
<reference key="1">
    <citation type="journal article" date="1996" name="EMBO J.">
        <title>A novel S phase inhibitor in fission yeast.</title>
        <authorList>
            <person name="Woollard A."/>
            <person name="Basi G."/>
            <person name="Nurse P."/>
        </authorList>
    </citation>
    <scope>NUCLEOTIDE SEQUENCE [GENOMIC DNA]</scope>
    <scope>FUNCTION</scope>
    <scope>INTERACTION WITH CDC22</scope>
    <source>
        <strain>972 / ATCC 24843</strain>
    </source>
</reference>
<reference key="2">
    <citation type="journal article" date="2002" name="Nature">
        <title>The genome sequence of Schizosaccharomyces pombe.</title>
        <authorList>
            <person name="Wood V."/>
            <person name="Gwilliam R."/>
            <person name="Rajandream M.A."/>
            <person name="Lyne M.H."/>
            <person name="Lyne R."/>
            <person name="Stewart A."/>
            <person name="Sgouros J.G."/>
            <person name="Peat N."/>
            <person name="Hayles J."/>
            <person name="Baker S.G."/>
            <person name="Basham D."/>
            <person name="Bowman S."/>
            <person name="Brooks K."/>
            <person name="Brown D."/>
            <person name="Brown S."/>
            <person name="Chillingworth T."/>
            <person name="Churcher C.M."/>
            <person name="Collins M."/>
            <person name="Connor R."/>
            <person name="Cronin A."/>
            <person name="Davis P."/>
            <person name="Feltwell T."/>
            <person name="Fraser A."/>
            <person name="Gentles S."/>
            <person name="Goble A."/>
            <person name="Hamlin N."/>
            <person name="Harris D.E."/>
            <person name="Hidalgo J."/>
            <person name="Hodgson G."/>
            <person name="Holroyd S."/>
            <person name="Hornsby T."/>
            <person name="Howarth S."/>
            <person name="Huckle E.J."/>
            <person name="Hunt S."/>
            <person name="Jagels K."/>
            <person name="James K.D."/>
            <person name="Jones L."/>
            <person name="Jones M."/>
            <person name="Leather S."/>
            <person name="McDonald S."/>
            <person name="McLean J."/>
            <person name="Mooney P."/>
            <person name="Moule S."/>
            <person name="Mungall K.L."/>
            <person name="Murphy L.D."/>
            <person name="Niblett D."/>
            <person name="Odell C."/>
            <person name="Oliver K."/>
            <person name="O'Neil S."/>
            <person name="Pearson D."/>
            <person name="Quail M.A."/>
            <person name="Rabbinowitsch E."/>
            <person name="Rutherford K.M."/>
            <person name="Rutter S."/>
            <person name="Saunders D."/>
            <person name="Seeger K."/>
            <person name="Sharp S."/>
            <person name="Skelton J."/>
            <person name="Simmonds M.N."/>
            <person name="Squares R."/>
            <person name="Squares S."/>
            <person name="Stevens K."/>
            <person name="Taylor K."/>
            <person name="Taylor R.G."/>
            <person name="Tivey A."/>
            <person name="Walsh S.V."/>
            <person name="Warren T."/>
            <person name="Whitehead S."/>
            <person name="Woodward J.R."/>
            <person name="Volckaert G."/>
            <person name="Aert R."/>
            <person name="Robben J."/>
            <person name="Grymonprez B."/>
            <person name="Weltjens I."/>
            <person name="Vanstreels E."/>
            <person name="Rieger M."/>
            <person name="Schaefer M."/>
            <person name="Mueller-Auer S."/>
            <person name="Gabel C."/>
            <person name="Fuchs M."/>
            <person name="Duesterhoeft A."/>
            <person name="Fritzc C."/>
            <person name="Holzer E."/>
            <person name="Moestl D."/>
            <person name="Hilbert H."/>
            <person name="Borzym K."/>
            <person name="Langer I."/>
            <person name="Beck A."/>
            <person name="Lehrach H."/>
            <person name="Reinhardt R."/>
            <person name="Pohl T.M."/>
            <person name="Eger P."/>
            <person name="Zimmermann W."/>
            <person name="Wedler H."/>
            <person name="Wambutt R."/>
            <person name="Purnelle B."/>
            <person name="Goffeau A."/>
            <person name="Cadieu E."/>
            <person name="Dreano S."/>
            <person name="Gloux S."/>
            <person name="Lelaure V."/>
            <person name="Mottier S."/>
            <person name="Galibert F."/>
            <person name="Aves S.J."/>
            <person name="Xiang Z."/>
            <person name="Hunt C."/>
            <person name="Moore K."/>
            <person name="Hurst S.M."/>
            <person name="Lucas M."/>
            <person name="Rochet M."/>
            <person name="Gaillardin C."/>
            <person name="Tallada V.A."/>
            <person name="Garzon A."/>
            <person name="Thode G."/>
            <person name="Daga R.R."/>
            <person name="Cruzado L."/>
            <person name="Jimenez J."/>
            <person name="Sanchez M."/>
            <person name="del Rey F."/>
            <person name="Benito J."/>
            <person name="Dominguez A."/>
            <person name="Revuelta J.L."/>
            <person name="Moreno S."/>
            <person name="Armstrong J."/>
            <person name="Forsburg S.L."/>
            <person name="Cerutti L."/>
            <person name="Lowe T."/>
            <person name="McCombie W.R."/>
            <person name="Paulsen I."/>
            <person name="Potashkin J."/>
            <person name="Shpakovski G.V."/>
            <person name="Ussery D."/>
            <person name="Barrell B.G."/>
            <person name="Nurse P."/>
        </authorList>
    </citation>
    <scope>NUCLEOTIDE SEQUENCE [LARGE SCALE GENOMIC DNA]</scope>
    <source>
        <strain>972 / ATCC 24843</strain>
    </source>
</reference>
<reference key="3">
    <citation type="journal article" date="2000" name="J. Cell Sci.">
        <title>The Spd1p S phase inhibitor can activate the DNA replication checkpoint pathway in fission yeast.</title>
        <authorList>
            <person name="Borgne A."/>
            <person name="Nurse P."/>
        </authorList>
    </citation>
    <scope>FUNCTION</scope>
    <scope>SUBCELLULAR LOCATION</scope>
</reference>
<reference key="4">
    <citation type="journal article" date="2003" name="Genes Dev.">
        <title>Cop9/signalosome subunits and Pcu4 regulate ribonucleotide reductase by both checkpoint-dependent and -independent mechanisms.</title>
        <authorList>
            <person name="Liu C."/>
            <person name="Powell K.A."/>
            <person name="Mundt K."/>
            <person name="Wu L."/>
            <person name="Carr A.M."/>
            <person name="Caspari T."/>
        </authorList>
    </citation>
    <scope>FUNCTION</scope>
    <scope>UBIQUITINATION</scope>
</reference>
<reference key="5">
    <citation type="journal article" date="2004" name="J. Biol. Chem.">
        <title>Ddb1 is required for the proteolysis of the Schizosaccharomyces pombe replication inhibitor Spd1 during S phase and after DNA damage.</title>
        <authorList>
            <person name="Bondar T."/>
            <person name="Ponomarev A."/>
            <person name="Raychaudhuri P."/>
        </authorList>
    </citation>
    <scope>UBIQUITINATION</scope>
</reference>
<reference key="6">
    <citation type="journal article" date="2005" name="EMBO J.">
        <title>Transactivation of Schizosaccharomyces pombe cdt2+ stimulates a Pcu4-Ddb1-CSN ubiquitin ligase.</title>
        <authorList>
            <person name="Liu C."/>
            <person name="Poitelea M."/>
            <person name="Watson A."/>
            <person name="Yoshida S.H."/>
            <person name="Shimoda C."/>
            <person name="Holmberg C."/>
            <person name="Nielsen O."/>
            <person name="Carr A.M."/>
        </authorList>
    </citation>
    <scope>UBIQUITINATION</scope>
</reference>
<reference key="7">
    <citation type="journal article" date="2006" name="J. Biol. Chem.">
        <title>The Schizosaccharomyces pombe replication inhibitor Spd1 regulates ribonucleotide reductase activity and dNTPs by binding to the large Cdc22 subunit.</title>
        <authorList>
            <person name="Hakansson P."/>
            <person name="Dahl L."/>
            <person name="Chilkova O."/>
            <person name="Domkin V."/>
            <person name="Thelander L."/>
        </authorList>
    </citation>
    <scope>FUNCTION</scope>
    <scope>INTERACTION WITH CDC22</scope>
</reference>
<reference key="8">
    <citation type="journal article" date="2006" name="Nat. Biotechnol.">
        <title>ORFeome cloning and global analysis of protein localization in the fission yeast Schizosaccharomyces pombe.</title>
        <authorList>
            <person name="Matsuyama A."/>
            <person name="Arai R."/>
            <person name="Yashiroda Y."/>
            <person name="Shirai A."/>
            <person name="Kamata A."/>
            <person name="Sekido S."/>
            <person name="Kobayashi Y."/>
            <person name="Hashimoto A."/>
            <person name="Hamamoto M."/>
            <person name="Hiraoka Y."/>
            <person name="Horinouchi S."/>
            <person name="Yoshida M."/>
        </authorList>
    </citation>
    <scope>SUBCELLULAR LOCATION [LARGE SCALE ANALYSIS]</scope>
</reference>
<organism>
    <name type="scientific">Schizosaccharomyces pombe (strain 972 / ATCC 24843)</name>
    <name type="common">Fission yeast</name>
    <dbReference type="NCBI Taxonomy" id="284812"/>
    <lineage>
        <taxon>Eukaryota</taxon>
        <taxon>Fungi</taxon>
        <taxon>Dikarya</taxon>
        <taxon>Ascomycota</taxon>
        <taxon>Taphrinomycotina</taxon>
        <taxon>Schizosaccharomycetes</taxon>
        <taxon>Schizosaccharomycetales</taxon>
        <taxon>Schizosaccharomycetaceae</taxon>
        <taxon>Schizosaccharomyces</taxon>
    </lineage>
</organism>
<dbReference type="EMBL" id="X98361">
    <property type="protein sequence ID" value="CAA67006.1"/>
    <property type="molecule type" value="Genomic_DNA"/>
</dbReference>
<dbReference type="EMBL" id="CU329670">
    <property type="protein sequence ID" value="CAB16248.1"/>
    <property type="molecule type" value="Genomic_DNA"/>
</dbReference>
<dbReference type="PIR" id="S71888">
    <property type="entry name" value="S71888"/>
</dbReference>
<dbReference type="RefSeq" id="NP_594981.1">
    <property type="nucleotide sequence ID" value="NM_001020412.2"/>
</dbReference>
<dbReference type="PDB" id="6QH1">
    <property type="method" value="X-ray"/>
    <property type="resolution" value="2.90 A"/>
    <property type="chains" value="D=29-38"/>
</dbReference>
<dbReference type="PDBsum" id="6QH1"/>
<dbReference type="SMR" id="Q10585"/>
<dbReference type="BioGRID" id="279149">
    <property type="interactions" value="52"/>
</dbReference>
<dbReference type="FunCoup" id="Q10585">
    <property type="interactions" value="202"/>
</dbReference>
<dbReference type="IntAct" id="Q10585">
    <property type="interactions" value="1"/>
</dbReference>
<dbReference type="STRING" id="284812.Q10585"/>
<dbReference type="iPTMnet" id="Q10585"/>
<dbReference type="PaxDb" id="4896-SPAC29B12.03.1"/>
<dbReference type="EnsemblFungi" id="SPAC29B12.03.1">
    <property type="protein sequence ID" value="SPAC29B12.03.1:pep"/>
    <property type="gene ID" value="SPAC29B12.03"/>
</dbReference>
<dbReference type="GeneID" id="2542696"/>
<dbReference type="KEGG" id="spo:2542696"/>
<dbReference type="PomBase" id="SPAC29B12.03">
    <property type="gene designation" value="spd1"/>
</dbReference>
<dbReference type="VEuPathDB" id="FungiDB:SPAC29B12.03"/>
<dbReference type="HOGENOM" id="CLU_2005232_0_0_1"/>
<dbReference type="InParanoid" id="Q10585"/>
<dbReference type="OMA" id="MEGTNER"/>
<dbReference type="PRO" id="PR:Q10585"/>
<dbReference type="Proteomes" id="UP000002485">
    <property type="component" value="Chromosome I"/>
</dbReference>
<dbReference type="GO" id="GO:0005737">
    <property type="term" value="C:cytoplasm"/>
    <property type="evidence" value="ECO:0000314"/>
    <property type="project" value="PomBase"/>
</dbReference>
<dbReference type="GO" id="GO:0005829">
    <property type="term" value="C:cytosol"/>
    <property type="evidence" value="ECO:0007005"/>
    <property type="project" value="PomBase"/>
</dbReference>
<dbReference type="GO" id="GO:0005634">
    <property type="term" value="C:nucleus"/>
    <property type="evidence" value="ECO:0000314"/>
    <property type="project" value="PomBase"/>
</dbReference>
<dbReference type="GO" id="GO:0044877">
    <property type="term" value="F:protein-containing complex binding"/>
    <property type="evidence" value="ECO:0000314"/>
    <property type="project" value="PomBase"/>
</dbReference>
<dbReference type="GO" id="GO:0043495">
    <property type="term" value="F:protein-membrane adaptor activity"/>
    <property type="evidence" value="ECO:0000316"/>
    <property type="project" value="PomBase"/>
</dbReference>
<dbReference type="GO" id="GO:1990846">
    <property type="term" value="F:ribonucleoside-diphosphate reductase inhibitor activity"/>
    <property type="evidence" value="ECO:0000314"/>
    <property type="project" value="PomBase"/>
</dbReference>
<dbReference type="GO" id="GO:0051301">
    <property type="term" value="P:cell division"/>
    <property type="evidence" value="ECO:0007669"/>
    <property type="project" value="UniProtKB-KW"/>
</dbReference>
<dbReference type="GO" id="GO:0006240">
    <property type="term" value="P:dCDP biosynthetic process"/>
    <property type="evidence" value="ECO:0000314"/>
    <property type="project" value="PomBase"/>
</dbReference>
<dbReference type="GO" id="GO:0008104">
    <property type="term" value="P:protein localization"/>
    <property type="evidence" value="ECO:0000318"/>
    <property type="project" value="GO_Central"/>
</dbReference>
<dbReference type="InterPro" id="IPR013900">
    <property type="entry name" value="RNR_inhibitor"/>
</dbReference>
<dbReference type="PANTHER" id="PTHR28081:SF1">
    <property type="entry name" value="DAMAGE-REGULATED IMPORT FACILITATOR 1"/>
    <property type="match status" value="1"/>
</dbReference>
<dbReference type="PANTHER" id="PTHR28081">
    <property type="entry name" value="DAMAGE-REGULATED IMPORT FACILITATOR 1-RELATED"/>
    <property type="match status" value="1"/>
</dbReference>
<dbReference type="Pfam" id="PF08591">
    <property type="entry name" value="RNR_inhib"/>
    <property type="match status" value="1"/>
</dbReference>
<keyword id="KW-0002">3D-structure</keyword>
<keyword id="KW-0131">Cell cycle</keyword>
<keyword id="KW-0132">Cell division</keyword>
<keyword id="KW-0963">Cytoplasm</keyword>
<keyword id="KW-0498">Mitosis</keyword>
<keyword id="KW-0539">Nucleus</keyword>
<keyword id="KW-1185">Reference proteome</keyword>
<keyword id="KW-0832">Ubl conjugation</keyword>
<sequence>MHSSKRVMTTKTHVEQPESSMRPQLPESIQGSLMDVGMRVRKSISTGYKSKQTTFPAYNPPLYNTVSENIALKNTAFSYEPNGTKRPFEQAIPNYNWANPPQDFEEPEWLKPFDVVMEGTNERL</sequence>
<name>SPD1_SCHPO</name>
<protein>
    <recommendedName>
        <fullName>S-phase delaying protein 1</fullName>
    </recommendedName>
    <alternativeName>
        <fullName>Protein p14</fullName>
    </alternativeName>
</protein>